<accession>Q5PNE6</accession>
<feature type="chain" id="PRO_0000298434" description="Putative ion-transport protein YfeO">
    <location>
        <begin position="1"/>
        <end position="411"/>
    </location>
</feature>
<feature type="transmembrane region" description="Helical" evidence="1">
    <location>
        <begin position="9"/>
        <end position="29"/>
    </location>
</feature>
<feature type="transmembrane region" description="Helical" evidence="1">
    <location>
        <begin position="54"/>
        <end position="74"/>
    </location>
</feature>
<feature type="transmembrane region" description="Helical" evidence="1">
    <location>
        <begin position="99"/>
        <end position="119"/>
    </location>
</feature>
<feature type="transmembrane region" description="Helical" evidence="1">
    <location>
        <begin position="149"/>
        <end position="169"/>
    </location>
</feature>
<feature type="transmembrane region" description="Helical" evidence="1">
    <location>
        <begin position="186"/>
        <end position="206"/>
    </location>
</feature>
<feature type="transmembrane region" description="Helical" evidence="1">
    <location>
        <begin position="223"/>
        <end position="243"/>
    </location>
</feature>
<feature type="transmembrane region" description="Helical" evidence="1">
    <location>
        <begin position="258"/>
        <end position="278"/>
    </location>
</feature>
<feature type="transmembrane region" description="Helical" evidence="1">
    <location>
        <begin position="296"/>
        <end position="316"/>
    </location>
</feature>
<feature type="transmembrane region" description="Helical" evidence="1">
    <location>
        <begin position="322"/>
        <end position="342"/>
    </location>
</feature>
<feature type="transmembrane region" description="Helical" evidence="1">
    <location>
        <begin position="343"/>
        <end position="363"/>
    </location>
</feature>
<feature type="transmembrane region" description="Helical" evidence="1">
    <location>
        <begin position="386"/>
        <end position="406"/>
    </location>
</feature>
<protein>
    <recommendedName>
        <fullName evidence="1">Putative ion-transport protein YfeO</fullName>
    </recommendedName>
</protein>
<reference key="1">
    <citation type="journal article" date="2004" name="Nat. Genet.">
        <title>Comparison of genome degradation in Paratyphi A and Typhi, human-restricted serovars of Salmonella enterica that cause typhoid.</title>
        <authorList>
            <person name="McClelland M."/>
            <person name="Sanderson K.E."/>
            <person name="Clifton S.W."/>
            <person name="Latreille P."/>
            <person name="Porwollik S."/>
            <person name="Sabo A."/>
            <person name="Meyer R."/>
            <person name="Bieri T."/>
            <person name="Ozersky P."/>
            <person name="McLellan M."/>
            <person name="Harkins C.R."/>
            <person name="Wang C."/>
            <person name="Nguyen C."/>
            <person name="Berghoff A."/>
            <person name="Elliott G."/>
            <person name="Kohlberg S."/>
            <person name="Strong C."/>
            <person name="Du F."/>
            <person name="Carter J."/>
            <person name="Kremizki C."/>
            <person name="Layman D."/>
            <person name="Leonard S."/>
            <person name="Sun H."/>
            <person name="Fulton L."/>
            <person name="Nash W."/>
            <person name="Miner T."/>
            <person name="Minx P."/>
            <person name="Delehaunty K."/>
            <person name="Fronick C."/>
            <person name="Magrini V."/>
            <person name="Nhan M."/>
            <person name="Warren W."/>
            <person name="Florea L."/>
            <person name="Spieth J."/>
            <person name="Wilson R.K."/>
        </authorList>
    </citation>
    <scope>NUCLEOTIDE SEQUENCE [LARGE SCALE GENOMIC DNA]</scope>
    <source>
        <strain>ATCC 9150 / SARB42</strain>
    </source>
</reference>
<sequence length="411" mass="42968">MFHPRARTMLLLSLPALIIGVASSLVLIAAMKIASVFQQFLWQRLPASIGIAYDSPFWIVGMLTLTGIVVGLIIRYSPGHAGPDPAIEPLISMPVSPSALPGLLLALIIGLAGGVSLGPEHPIMTINIALAAAFGSRLFPRITALDWTILASAGTIGALFGTPVAAALIFSQTLSGSNDIPMWDRLFAPLMAAAAGSLTTSLFFHPHFSLPIAHYTQMRLVDIASGAIVAAIAIAAGMVAVWCLPRLHELLHRLKNPVLILGIGGFILGILGVIGGPLTLFKGLDEMQQMAFSQTLGAGDYFTLAVVKLAALVIAAASGFRGGRIFPAVFIGAALGLMLHAHVEAVPAAITVSCAILGLVLVVTRDGWLSLFMAAVVVPDTNLLPLLCIVMLPAWLLLAGKPLLAANRHEP</sequence>
<proteinExistence type="inferred from homology"/>
<gene>
    <name evidence="1" type="primary">yfeO</name>
    <name type="ordered locus">SPA0456</name>
</gene>
<evidence type="ECO:0000255" key="1">
    <source>
        <dbReference type="HAMAP-Rule" id="MF_01115"/>
    </source>
</evidence>
<comment type="subcellular location">
    <subcellularLocation>
        <location evidence="1">Cell membrane</location>
        <topology evidence="1">Multi-pass membrane protein</topology>
    </subcellularLocation>
</comment>
<comment type="similarity">
    <text evidence="1">Belongs to the chloride channel (TC 2.A.49) family.</text>
</comment>
<organism>
    <name type="scientific">Salmonella paratyphi A (strain ATCC 9150 / SARB42)</name>
    <dbReference type="NCBI Taxonomy" id="295319"/>
    <lineage>
        <taxon>Bacteria</taxon>
        <taxon>Pseudomonadati</taxon>
        <taxon>Pseudomonadota</taxon>
        <taxon>Gammaproteobacteria</taxon>
        <taxon>Enterobacterales</taxon>
        <taxon>Enterobacteriaceae</taxon>
        <taxon>Salmonella</taxon>
    </lineage>
</organism>
<name>YFEO_SALPA</name>
<dbReference type="EMBL" id="CP000026">
    <property type="protein sequence ID" value="AAV76461.1"/>
    <property type="molecule type" value="Genomic_DNA"/>
</dbReference>
<dbReference type="RefSeq" id="WP_000468912.1">
    <property type="nucleotide sequence ID" value="NC_006511.1"/>
</dbReference>
<dbReference type="SMR" id="Q5PNE6"/>
<dbReference type="KEGG" id="spt:SPA0456"/>
<dbReference type="HOGENOM" id="CLU_053130_0_0_6"/>
<dbReference type="Proteomes" id="UP000008185">
    <property type="component" value="Chromosome"/>
</dbReference>
<dbReference type="GO" id="GO:0005886">
    <property type="term" value="C:plasma membrane"/>
    <property type="evidence" value="ECO:0007669"/>
    <property type="project" value="UniProtKB-SubCell"/>
</dbReference>
<dbReference type="GO" id="GO:0015108">
    <property type="term" value="F:chloride transmembrane transporter activity"/>
    <property type="evidence" value="ECO:0007669"/>
    <property type="project" value="InterPro"/>
</dbReference>
<dbReference type="GO" id="GO:0005216">
    <property type="term" value="F:monoatomic ion channel activity"/>
    <property type="evidence" value="ECO:0007669"/>
    <property type="project" value="UniProtKB-UniRule"/>
</dbReference>
<dbReference type="CDD" id="cd00400">
    <property type="entry name" value="Voltage_gated_ClC"/>
    <property type="match status" value="1"/>
</dbReference>
<dbReference type="FunFam" id="1.10.3080.10:FF:000007">
    <property type="entry name" value="Putative ion-transport protein YfeO"/>
    <property type="match status" value="1"/>
</dbReference>
<dbReference type="Gene3D" id="1.10.3080.10">
    <property type="entry name" value="Clc chloride channel"/>
    <property type="match status" value="1"/>
</dbReference>
<dbReference type="HAMAP" id="MF_01115">
    <property type="entry name" value="CLC_YfeO"/>
    <property type="match status" value="1"/>
</dbReference>
<dbReference type="InterPro" id="IPR022969">
    <property type="entry name" value="Chloride_channel_YfeO"/>
</dbReference>
<dbReference type="InterPro" id="IPR014743">
    <property type="entry name" value="Cl-channel_core"/>
</dbReference>
<dbReference type="InterPro" id="IPR001807">
    <property type="entry name" value="ClC"/>
</dbReference>
<dbReference type="InterPro" id="IPR050368">
    <property type="entry name" value="ClC-type_chloride_channel"/>
</dbReference>
<dbReference type="NCBIfam" id="NF002971">
    <property type="entry name" value="PRK03655.1"/>
    <property type="match status" value="1"/>
</dbReference>
<dbReference type="PANTHER" id="PTHR43427">
    <property type="entry name" value="CHLORIDE CHANNEL PROTEIN CLC-E"/>
    <property type="match status" value="1"/>
</dbReference>
<dbReference type="PANTHER" id="PTHR43427:SF9">
    <property type="entry name" value="ION-TRANSPORT PROTEIN YFEO-RELATED"/>
    <property type="match status" value="1"/>
</dbReference>
<dbReference type="Pfam" id="PF00654">
    <property type="entry name" value="Voltage_CLC"/>
    <property type="match status" value="1"/>
</dbReference>
<dbReference type="PRINTS" id="PR00762">
    <property type="entry name" value="CLCHANNEL"/>
</dbReference>
<dbReference type="SUPFAM" id="SSF81340">
    <property type="entry name" value="Clc chloride channel"/>
    <property type="match status" value="1"/>
</dbReference>
<keyword id="KW-1003">Cell membrane</keyword>
<keyword id="KW-0407">Ion channel</keyword>
<keyword id="KW-0406">Ion transport</keyword>
<keyword id="KW-0472">Membrane</keyword>
<keyword id="KW-0812">Transmembrane</keyword>
<keyword id="KW-1133">Transmembrane helix</keyword>
<keyword id="KW-0813">Transport</keyword>